<comment type="function">
    <text evidence="1 2">Plays an important role in several reproductive functions. Induces Muellerian duct regression during male fetal sexual differentiation and plays a role in Leydig cell differentiation and function (By similarity). In female acts as a negative regulator of the primordial to primary follicle transition and decreases FSH sensitivity of growing follicles. AMH signals by binding to a specific type-II receptor, AMHR2, that heterodimerizes with type-I receptors (ACVR1 and BMPR1A), and recruiting SMAD proteins that are translocated to the nucleus to regulate target gene expression (By similarity).</text>
</comment>
<comment type="subunit">
    <text evidence="1">Homodimer; disulfide-linked.</text>
</comment>
<comment type="subcellular location">
    <subcellularLocation>
        <location evidence="1">Secreted</location>
    </subcellularLocation>
</comment>
<comment type="tissue specificity">
    <text evidence="4">Expressed in fetal testis and adult ovaries.</text>
</comment>
<comment type="developmental stage">
    <text evidence="4">Expressed in testis at a high level immediately after birth, and decreases to a very low level by 3 months.</text>
</comment>
<comment type="PTM">
    <text evidence="1">Preproprotein is proteolytically processed to generate N- and C-terminal cleavage products that homodimerize and associate to form a biologically active non-covalent complex. Binding of the non-covalent complex to AMHR2 induces dissociation of the pro-region from the mature C-terminal dimer. The N-terminal portion of the protein, despite having no intrinsic activity, has the role of amplifying the activity of the C-terminus.</text>
</comment>
<comment type="similarity">
    <text evidence="6">Belongs to the TGF-beta family.</text>
</comment>
<accession>P03972</accession>
<feature type="signal peptide" evidence="3">
    <location>
        <begin position="1"/>
        <end position="24"/>
    </location>
</feature>
<feature type="propeptide" id="PRO_0000033744" evidence="1">
    <location>
        <begin position="25"/>
        <end position="466"/>
    </location>
</feature>
<feature type="chain" id="PRO_0000033745" description="Muellerian-inhibiting factor">
    <location>
        <begin position="467"/>
        <end position="575"/>
    </location>
</feature>
<feature type="site" description="Cleavage" evidence="1">
    <location>
        <begin position="466"/>
        <end position="467"/>
    </location>
</feature>
<feature type="glycosylation site" description="N-linked (GlcNAc...) asparagine" evidence="3">
    <location>
        <position position="78"/>
    </location>
</feature>
<feature type="glycosylation site" description="N-linked (GlcNAc...) asparagine" evidence="3">
    <location>
        <position position="344"/>
    </location>
</feature>
<feature type="disulfide bond" evidence="1">
    <location>
        <begin position="477"/>
        <end position="541"/>
    </location>
</feature>
<feature type="disulfide bond" evidence="1">
    <location>
        <begin position="503"/>
        <end position="572"/>
    </location>
</feature>
<feature type="disulfide bond" evidence="1">
    <location>
        <begin position="507"/>
        <end position="574"/>
    </location>
</feature>
<feature type="disulfide bond" description="Interchain" evidence="1">
    <location>
        <position position="540"/>
    </location>
</feature>
<protein>
    <recommendedName>
        <fullName>Muellerian-inhibiting factor</fullName>
    </recommendedName>
    <alternativeName>
        <fullName>Anti-Muellerian hormone</fullName>
        <shortName>AMH</shortName>
    </alternativeName>
    <alternativeName>
        <fullName evidence="5">Muellerian-inhibiting substance</fullName>
        <shortName evidence="5">MIS</shortName>
    </alternativeName>
</protein>
<dbReference type="EMBL" id="M13151">
    <property type="protein sequence ID" value="AAA98765.1"/>
    <property type="molecule type" value="Genomic_DNA"/>
</dbReference>
<dbReference type="PIR" id="A01398">
    <property type="entry name" value="WFBOM"/>
</dbReference>
<dbReference type="RefSeq" id="NP_776315.1">
    <property type="nucleotide sequence ID" value="NM_173890.1"/>
</dbReference>
<dbReference type="SMR" id="P03972"/>
<dbReference type="FunCoup" id="P03972">
    <property type="interactions" value="373"/>
</dbReference>
<dbReference type="STRING" id="9913.ENSBTAP00000019912"/>
<dbReference type="GlyCosmos" id="P03972">
    <property type="glycosylation" value="2 sites, No reported glycans"/>
</dbReference>
<dbReference type="GlyGen" id="P03972">
    <property type="glycosylation" value="2 sites"/>
</dbReference>
<dbReference type="PaxDb" id="9913-ENSBTAP00000019912"/>
<dbReference type="GeneID" id="280718"/>
<dbReference type="KEGG" id="bta:280718"/>
<dbReference type="CTD" id="268"/>
<dbReference type="eggNOG" id="KOG3900">
    <property type="taxonomic scope" value="Eukaryota"/>
</dbReference>
<dbReference type="InParanoid" id="P03972"/>
<dbReference type="OrthoDB" id="9893739at2759"/>
<dbReference type="Proteomes" id="UP000009136">
    <property type="component" value="Unplaced"/>
</dbReference>
<dbReference type="GO" id="GO:0005615">
    <property type="term" value="C:extracellular space"/>
    <property type="evidence" value="ECO:0000250"/>
    <property type="project" value="UniProtKB"/>
</dbReference>
<dbReference type="GO" id="GO:0008083">
    <property type="term" value="F:growth factor activity"/>
    <property type="evidence" value="ECO:0007669"/>
    <property type="project" value="UniProtKB-KW"/>
</dbReference>
<dbReference type="GO" id="GO:0005114">
    <property type="term" value="F:type II transforming growth factor beta receptor binding"/>
    <property type="evidence" value="ECO:0000250"/>
    <property type="project" value="UniProtKB"/>
</dbReference>
<dbReference type="GO" id="GO:1990262">
    <property type="term" value="P:anti-Mullerian hormone receptor signaling pathway"/>
    <property type="evidence" value="ECO:0000250"/>
    <property type="project" value="UniProtKB"/>
</dbReference>
<dbReference type="GO" id="GO:0007506">
    <property type="term" value="P:gonadal mesoderm development"/>
    <property type="evidence" value="ECO:0007669"/>
    <property type="project" value="UniProtKB-KW"/>
</dbReference>
<dbReference type="GO" id="GO:0033327">
    <property type="term" value="P:Leydig cell differentiation"/>
    <property type="evidence" value="ECO:0000250"/>
    <property type="project" value="UniProtKB"/>
</dbReference>
<dbReference type="GO" id="GO:0001880">
    <property type="term" value="P:Mullerian duct regression"/>
    <property type="evidence" value="ECO:0000250"/>
    <property type="project" value="UniProtKB"/>
</dbReference>
<dbReference type="GO" id="GO:2000355">
    <property type="term" value="P:negative regulation of ovarian follicle development"/>
    <property type="evidence" value="ECO:0000250"/>
    <property type="project" value="UniProtKB"/>
</dbReference>
<dbReference type="GO" id="GO:0001541">
    <property type="term" value="P:ovarian follicle development"/>
    <property type="evidence" value="ECO:0000250"/>
    <property type="project" value="UniProtKB"/>
</dbReference>
<dbReference type="CDD" id="cd13757">
    <property type="entry name" value="TGF_beta_AMH"/>
    <property type="match status" value="1"/>
</dbReference>
<dbReference type="FunFam" id="2.10.90.10:FF:000033">
    <property type="entry name" value="Muellerian-inhibiting factor"/>
    <property type="match status" value="1"/>
</dbReference>
<dbReference type="Gene3D" id="2.10.90.10">
    <property type="entry name" value="Cystine-knot cytokines"/>
    <property type="match status" value="1"/>
</dbReference>
<dbReference type="InterPro" id="IPR006799">
    <property type="entry name" value="AMH_N"/>
</dbReference>
<dbReference type="InterPro" id="IPR029034">
    <property type="entry name" value="Cystine-knot_cytokine"/>
</dbReference>
<dbReference type="InterPro" id="IPR021203">
    <property type="entry name" value="Muellerian-inhibiting_factor"/>
</dbReference>
<dbReference type="InterPro" id="IPR001839">
    <property type="entry name" value="TGF-b_C"/>
</dbReference>
<dbReference type="InterPro" id="IPR017948">
    <property type="entry name" value="TGFb_CS"/>
</dbReference>
<dbReference type="PANTHER" id="PTHR15009">
    <property type="entry name" value="MUELLERIAN-INHIBITING FACTOR"/>
    <property type="match status" value="1"/>
</dbReference>
<dbReference type="PANTHER" id="PTHR15009:SF4">
    <property type="entry name" value="MUELLERIAN-INHIBITING FACTOR"/>
    <property type="match status" value="1"/>
</dbReference>
<dbReference type="Pfam" id="PF04709">
    <property type="entry name" value="AMH_N"/>
    <property type="match status" value="1"/>
</dbReference>
<dbReference type="Pfam" id="PF00019">
    <property type="entry name" value="TGF_beta"/>
    <property type="match status" value="1"/>
</dbReference>
<dbReference type="PIRSF" id="PIRSF037270">
    <property type="entry name" value="Muellerian-inhibiting_factor"/>
    <property type="match status" value="1"/>
</dbReference>
<dbReference type="SMART" id="SM00204">
    <property type="entry name" value="TGFB"/>
    <property type="match status" value="1"/>
</dbReference>
<dbReference type="SUPFAM" id="SSF57501">
    <property type="entry name" value="Cystine-knot cytokines"/>
    <property type="match status" value="1"/>
</dbReference>
<dbReference type="PROSITE" id="PS00250">
    <property type="entry name" value="TGF_BETA_1"/>
    <property type="match status" value="1"/>
</dbReference>
<dbReference type="PROSITE" id="PS51362">
    <property type="entry name" value="TGF_BETA_2"/>
    <property type="match status" value="1"/>
</dbReference>
<keyword id="KW-0221">Differentiation</keyword>
<keyword id="KW-0903">Direct protein sequencing</keyword>
<keyword id="KW-1015">Disulfide bond</keyword>
<keyword id="KW-0325">Glycoprotein</keyword>
<keyword id="KW-0334">Gonadal differentiation</keyword>
<keyword id="KW-0339">Growth factor</keyword>
<keyword id="KW-1185">Reference proteome</keyword>
<keyword id="KW-0964">Secreted</keyword>
<keyword id="KW-0732">Signal</keyword>
<sequence>MPGPSLSLALVLSAMGALLRPGTPREEVFSTSALPREQATGSGALIFQQAWDWPLSSLWLPGSPLDPLCLVTLHGSGNGSRAPLRVVGVLSSYEQAFLEAVRRTHWGLSDLTTFAVCPAGNGQPVLPHLQRLQAWLGEPGGRWLVVLHLEEVTWEPTPLLRFQEPPPGGASPPELALLVVYPGPGLEVTVTGAGLPGTQSLCLTADSDFLALVVDHPEGAWRRPGLALTLRRRGNGALLSTAQLQALLFGADSRCFTRKTPALLLLLPARSSAPMPAHGRLDLVPFPQPRASPEPEEAPPSADPFLETLTRLVRALAGPPARASPPRLALDPGALAGFPQGQVNLSDPAALERLLDGEEPLLLLLPPTAATTGVPATPQGPKSPLWAAGLARRVAAELQAVAAELRALPGLPPAAPPLLARLLALCPGNPDSPGGPLRALLLLKALQGLRAEWRGRERSGSARAQRSAGAAAADGPCALRELSVDLRAERSVLIPETYQANNCQGACGWPQSDRNPRYGNHVVLLLKMQARGATLARPPCCVPTAYTGKLLISLSEERISAHHVPNMVATECGCR</sequence>
<evidence type="ECO:0000250" key="1">
    <source>
        <dbReference type="UniProtKB" id="P03971"/>
    </source>
</evidence>
<evidence type="ECO:0000250" key="2">
    <source>
        <dbReference type="UniProtKB" id="P27106"/>
    </source>
</evidence>
<evidence type="ECO:0000255" key="3"/>
<evidence type="ECO:0000269" key="4">
    <source>
    </source>
</evidence>
<evidence type="ECO:0000303" key="5">
    <source>
    </source>
</evidence>
<evidence type="ECO:0000305" key="6"/>
<organism>
    <name type="scientific">Bos taurus</name>
    <name type="common">Bovine</name>
    <dbReference type="NCBI Taxonomy" id="9913"/>
    <lineage>
        <taxon>Eukaryota</taxon>
        <taxon>Metazoa</taxon>
        <taxon>Chordata</taxon>
        <taxon>Craniata</taxon>
        <taxon>Vertebrata</taxon>
        <taxon>Euteleostomi</taxon>
        <taxon>Mammalia</taxon>
        <taxon>Eutheria</taxon>
        <taxon>Laurasiatheria</taxon>
        <taxon>Artiodactyla</taxon>
        <taxon>Ruminantia</taxon>
        <taxon>Pecora</taxon>
        <taxon>Bovidae</taxon>
        <taxon>Bovinae</taxon>
        <taxon>Bos</taxon>
    </lineage>
</organism>
<reference key="1">
    <citation type="journal article" date="1986" name="Cell">
        <title>Isolation of the bovine and human genes for Mullerian inhibiting substance and expression of the human gene in animal cells.</title>
        <authorList>
            <person name="Cate R.L."/>
            <person name="Mattaliano R.J."/>
            <person name="Hession C."/>
            <person name="Tizard R."/>
            <person name="Farber N.M."/>
            <person name="Cheung A."/>
            <person name="Ninfa E.G."/>
            <person name="Frey A.Z."/>
            <person name="Gash D.J."/>
            <person name="Chow E.P."/>
            <person name="Fisher R.A."/>
            <person name="Bertonis J.M."/>
            <person name="Torres G."/>
            <person name="Wallner B.P."/>
            <person name="Ramachandran K.L."/>
            <person name="Ragin R.C."/>
            <person name="Manganaro T.F."/>
            <person name="McLaughlin D.T."/>
            <person name="Donahoe P.K."/>
        </authorList>
    </citation>
    <scope>NUCLEOTIDE SEQUENCE [GENOMIC DNA]</scope>
    <scope>PARTIAL PROTEIN SEQUENCE</scope>
    <scope>TISSUE SPECIFICITY</scope>
    <scope>DEVELOPMENTAL STAGE</scope>
</reference>
<name>MIS_BOVIN</name>
<gene>
    <name type="primary">AMH</name>
</gene>
<proteinExistence type="evidence at protein level"/>